<accession>O27030</accession>
<reference key="1">
    <citation type="journal article" date="1997" name="J. Bacteriol.">
        <title>Complete genome sequence of Methanobacterium thermoautotrophicum deltaH: functional analysis and comparative genomics.</title>
        <authorList>
            <person name="Smith D.R."/>
            <person name="Doucette-Stamm L.A."/>
            <person name="Deloughery C."/>
            <person name="Lee H.-M."/>
            <person name="Dubois J."/>
            <person name="Aldredge T."/>
            <person name="Bashirzadeh R."/>
            <person name="Blakely D."/>
            <person name="Cook R."/>
            <person name="Gilbert K."/>
            <person name="Harrison D."/>
            <person name="Hoang L."/>
            <person name="Keagle P."/>
            <person name="Lumm W."/>
            <person name="Pothier B."/>
            <person name="Qiu D."/>
            <person name="Spadafora R."/>
            <person name="Vicare R."/>
            <person name="Wang Y."/>
            <person name="Wierzbowski J."/>
            <person name="Gibson R."/>
            <person name="Jiwani N."/>
            <person name="Caruso A."/>
            <person name="Bush D."/>
            <person name="Safer H."/>
            <person name="Patwell D."/>
            <person name="Prabhakar S."/>
            <person name="McDougall S."/>
            <person name="Shimer G."/>
            <person name="Goyal A."/>
            <person name="Pietrovski S."/>
            <person name="Church G.M."/>
            <person name="Daniels C.J."/>
            <person name="Mao J.-I."/>
            <person name="Rice P."/>
            <person name="Noelling J."/>
            <person name="Reeve J.N."/>
        </authorList>
    </citation>
    <scope>NUCLEOTIDE SEQUENCE [LARGE SCALE GENOMIC DNA]</scope>
    <source>
        <strain>ATCC 29096 / DSM 1053 / JCM 10044 / NBRC 100330 / Delta H</strain>
    </source>
</reference>
<name>Y949_METTH</name>
<sequence length="135" mass="16115">MRGDRSDRLMKKEIFNLNRHLPSRRKTLEELLREDRPHVTGADGTRHRFKWAELEDLRGMLTEDEARRLRLPIYIEIESETSGARIAGDIEVKVVSEVLERDDEGDEIYIYRPEMRVLRARFPTVTQYMFLVREL</sequence>
<comment type="similarity">
    <text evidence="1">Belongs to the UPF0216 family.</text>
</comment>
<dbReference type="EMBL" id="AE000666">
    <property type="protein sequence ID" value="AAB85445.1"/>
    <property type="molecule type" value="Genomic_DNA"/>
</dbReference>
<dbReference type="PIR" id="H69226">
    <property type="entry name" value="H69226"/>
</dbReference>
<dbReference type="RefSeq" id="WP_010876580.1">
    <property type="nucleotide sequence ID" value="NC_000916.1"/>
</dbReference>
<dbReference type="SMR" id="O27030"/>
<dbReference type="STRING" id="187420.MTH_949"/>
<dbReference type="PaxDb" id="187420-MTH_949"/>
<dbReference type="EnsemblBacteria" id="AAB85445">
    <property type="protein sequence ID" value="AAB85445"/>
    <property type="gene ID" value="MTH_949"/>
</dbReference>
<dbReference type="KEGG" id="mth:MTH_949"/>
<dbReference type="PATRIC" id="fig|187420.15.peg.932"/>
<dbReference type="HOGENOM" id="CLU_146474_0_0_2"/>
<dbReference type="InParanoid" id="O27030"/>
<dbReference type="Proteomes" id="UP000005223">
    <property type="component" value="Chromosome"/>
</dbReference>
<dbReference type="HAMAP" id="MF_00585">
    <property type="entry name" value="UPF0216"/>
    <property type="match status" value="1"/>
</dbReference>
<dbReference type="InterPro" id="IPR002746">
    <property type="entry name" value="UPF0216"/>
</dbReference>
<dbReference type="NCBIfam" id="NF003153">
    <property type="entry name" value="PRK04115.1"/>
    <property type="match status" value="1"/>
</dbReference>
<dbReference type="Pfam" id="PF01886">
    <property type="entry name" value="DUF61"/>
    <property type="match status" value="1"/>
</dbReference>
<dbReference type="PIRSF" id="PIRSF005264">
    <property type="entry name" value="UCP005264"/>
    <property type="match status" value="1"/>
</dbReference>
<keyword id="KW-1185">Reference proteome</keyword>
<evidence type="ECO:0000255" key="1">
    <source>
        <dbReference type="HAMAP-Rule" id="MF_00585"/>
    </source>
</evidence>
<gene>
    <name type="ordered locus">MTH_949</name>
</gene>
<organism>
    <name type="scientific">Methanothermobacter thermautotrophicus (strain ATCC 29096 / DSM 1053 / JCM 10044 / NBRC 100330 / Delta H)</name>
    <name type="common">Methanobacterium thermoautotrophicum</name>
    <dbReference type="NCBI Taxonomy" id="187420"/>
    <lineage>
        <taxon>Archaea</taxon>
        <taxon>Methanobacteriati</taxon>
        <taxon>Methanobacteriota</taxon>
        <taxon>Methanomada group</taxon>
        <taxon>Methanobacteria</taxon>
        <taxon>Methanobacteriales</taxon>
        <taxon>Methanobacteriaceae</taxon>
        <taxon>Methanothermobacter</taxon>
    </lineage>
</organism>
<proteinExistence type="inferred from homology"/>
<feature type="chain" id="PRO_0000144226" description="UPF0216 protein MTH_949">
    <location>
        <begin position="1"/>
        <end position="135"/>
    </location>
</feature>
<protein>
    <recommendedName>
        <fullName evidence="1">UPF0216 protein MTH_949</fullName>
    </recommendedName>
</protein>